<organism>
    <name type="scientific">Shewanella denitrificans (strain OS217 / ATCC BAA-1090 / DSM 15013)</name>
    <dbReference type="NCBI Taxonomy" id="318161"/>
    <lineage>
        <taxon>Bacteria</taxon>
        <taxon>Pseudomonadati</taxon>
        <taxon>Pseudomonadota</taxon>
        <taxon>Gammaproteobacteria</taxon>
        <taxon>Alteromonadales</taxon>
        <taxon>Shewanellaceae</taxon>
        <taxon>Shewanella</taxon>
    </lineage>
</organism>
<sequence>MALWGGRFQGETSALFKLFNDSLPVDYRLFEQDVIGSIAWADAIASVGVISAAECTELKAALKELLAEVGDDPQVIISTGAEDIHSFVEQKLIAKVGDLGKKLHTGRSRNDQVATDLKLWCKREGAALLARLNTLRSELIALAEREVDAVMPGYTHLQRAQPITFGHWCLAYVEMFERDLSRLTDALKRADTCPLGSGALAGTAYPIDRHALASALNFARPTLNSLDSVSDRDHVVELCSSASISMMHLSRMAEDLIFFNSGEANFISLADDVTSGSSLMPQKKNPDALELIRGKTGRVYGSLMGILTTMKALPLAYNKDMQEDKEGLFDVVDSWAICLDMAALVLSGLKVNREPALQAAQQGYANATELADYLVAKGMPFREAHHVVGEVVVFAITQQQPIEDLTLTQLQAFAKEISDDVYPNLTIAACLSKRNVLGGTAVNQVSAAIAVKKQD</sequence>
<comment type="catalytic activity">
    <reaction evidence="1">
        <text>2-(N(omega)-L-arginino)succinate = fumarate + L-arginine</text>
        <dbReference type="Rhea" id="RHEA:24020"/>
        <dbReference type="ChEBI" id="CHEBI:29806"/>
        <dbReference type="ChEBI" id="CHEBI:32682"/>
        <dbReference type="ChEBI" id="CHEBI:57472"/>
        <dbReference type="EC" id="4.3.2.1"/>
    </reaction>
</comment>
<comment type="pathway">
    <text evidence="1">Amino-acid biosynthesis; L-arginine biosynthesis; L-arginine from L-ornithine and carbamoyl phosphate: step 3/3.</text>
</comment>
<comment type="subcellular location">
    <subcellularLocation>
        <location evidence="1">Cytoplasm</location>
    </subcellularLocation>
</comment>
<comment type="similarity">
    <text evidence="1">Belongs to the lyase 1 family. Argininosuccinate lyase subfamily.</text>
</comment>
<proteinExistence type="inferred from homology"/>
<feature type="chain" id="PRO_1000000537" description="Argininosuccinate lyase">
    <location>
        <begin position="1"/>
        <end position="455"/>
    </location>
</feature>
<gene>
    <name evidence="1" type="primary">argH</name>
    <name type="ordered locus">Sden_0254</name>
</gene>
<protein>
    <recommendedName>
        <fullName evidence="1">Argininosuccinate lyase</fullName>
        <shortName evidence="1">ASAL</shortName>
        <ecNumber evidence="1">4.3.2.1</ecNumber>
    </recommendedName>
    <alternativeName>
        <fullName evidence="1">Arginosuccinase</fullName>
    </alternativeName>
</protein>
<name>ARLY_SHEDO</name>
<reference key="1">
    <citation type="submission" date="2006-03" db="EMBL/GenBank/DDBJ databases">
        <title>Complete sequence of Shewanella denitrificans OS217.</title>
        <authorList>
            <consortium name="US DOE Joint Genome Institute"/>
            <person name="Copeland A."/>
            <person name="Lucas S."/>
            <person name="Lapidus A."/>
            <person name="Barry K."/>
            <person name="Detter J.C."/>
            <person name="Glavina del Rio T."/>
            <person name="Hammon N."/>
            <person name="Israni S."/>
            <person name="Dalin E."/>
            <person name="Tice H."/>
            <person name="Pitluck S."/>
            <person name="Brettin T."/>
            <person name="Bruce D."/>
            <person name="Han C."/>
            <person name="Tapia R."/>
            <person name="Gilna P."/>
            <person name="Kiss H."/>
            <person name="Schmutz J."/>
            <person name="Larimer F."/>
            <person name="Land M."/>
            <person name="Hauser L."/>
            <person name="Kyrpides N."/>
            <person name="Lykidis A."/>
            <person name="Richardson P."/>
        </authorList>
    </citation>
    <scope>NUCLEOTIDE SEQUENCE [LARGE SCALE GENOMIC DNA]</scope>
    <source>
        <strain>OS217 / ATCC BAA-1090 / DSM 15013</strain>
    </source>
</reference>
<keyword id="KW-0028">Amino-acid biosynthesis</keyword>
<keyword id="KW-0055">Arginine biosynthesis</keyword>
<keyword id="KW-0963">Cytoplasm</keyword>
<keyword id="KW-0456">Lyase</keyword>
<keyword id="KW-1185">Reference proteome</keyword>
<accession>Q12SM6</accession>
<evidence type="ECO:0000255" key="1">
    <source>
        <dbReference type="HAMAP-Rule" id="MF_00006"/>
    </source>
</evidence>
<dbReference type="EC" id="4.3.2.1" evidence="1"/>
<dbReference type="EMBL" id="CP000302">
    <property type="protein sequence ID" value="ABE53550.1"/>
    <property type="molecule type" value="Genomic_DNA"/>
</dbReference>
<dbReference type="RefSeq" id="WP_011494717.1">
    <property type="nucleotide sequence ID" value="NC_007954.1"/>
</dbReference>
<dbReference type="SMR" id="Q12SM6"/>
<dbReference type="STRING" id="318161.Sden_0254"/>
<dbReference type="KEGG" id="sdn:Sden_0254"/>
<dbReference type="eggNOG" id="COG0165">
    <property type="taxonomic scope" value="Bacteria"/>
</dbReference>
<dbReference type="HOGENOM" id="CLU_027272_2_3_6"/>
<dbReference type="OrthoDB" id="9769623at2"/>
<dbReference type="UniPathway" id="UPA00068">
    <property type="reaction ID" value="UER00114"/>
</dbReference>
<dbReference type="Proteomes" id="UP000001982">
    <property type="component" value="Chromosome"/>
</dbReference>
<dbReference type="GO" id="GO:0005829">
    <property type="term" value="C:cytosol"/>
    <property type="evidence" value="ECO:0007669"/>
    <property type="project" value="TreeGrafter"/>
</dbReference>
<dbReference type="GO" id="GO:0004056">
    <property type="term" value="F:argininosuccinate lyase activity"/>
    <property type="evidence" value="ECO:0007669"/>
    <property type="project" value="UniProtKB-UniRule"/>
</dbReference>
<dbReference type="GO" id="GO:0042450">
    <property type="term" value="P:arginine biosynthetic process via ornithine"/>
    <property type="evidence" value="ECO:0007669"/>
    <property type="project" value="InterPro"/>
</dbReference>
<dbReference type="GO" id="GO:0006526">
    <property type="term" value="P:L-arginine biosynthetic process"/>
    <property type="evidence" value="ECO:0007669"/>
    <property type="project" value="UniProtKB-UniRule"/>
</dbReference>
<dbReference type="CDD" id="cd01359">
    <property type="entry name" value="Argininosuccinate_lyase"/>
    <property type="match status" value="1"/>
</dbReference>
<dbReference type="FunFam" id="1.10.40.30:FF:000001">
    <property type="entry name" value="Argininosuccinate lyase"/>
    <property type="match status" value="1"/>
</dbReference>
<dbReference type="FunFam" id="1.20.200.10:FF:000006">
    <property type="entry name" value="Argininosuccinate lyase"/>
    <property type="match status" value="1"/>
</dbReference>
<dbReference type="Gene3D" id="1.10.40.30">
    <property type="entry name" value="Fumarase/aspartase (C-terminal domain)"/>
    <property type="match status" value="1"/>
</dbReference>
<dbReference type="Gene3D" id="1.20.200.10">
    <property type="entry name" value="Fumarase/aspartase (Central domain)"/>
    <property type="match status" value="1"/>
</dbReference>
<dbReference type="Gene3D" id="1.10.275.10">
    <property type="entry name" value="Fumarase/aspartase (N-terminal domain)"/>
    <property type="match status" value="1"/>
</dbReference>
<dbReference type="HAMAP" id="MF_00006">
    <property type="entry name" value="Arg_succ_lyase"/>
    <property type="match status" value="1"/>
</dbReference>
<dbReference type="InterPro" id="IPR029419">
    <property type="entry name" value="Arg_succ_lyase_C"/>
</dbReference>
<dbReference type="InterPro" id="IPR009049">
    <property type="entry name" value="Argininosuccinate_lyase"/>
</dbReference>
<dbReference type="InterPro" id="IPR024083">
    <property type="entry name" value="Fumarase/histidase_N"/>
</dbReference>
<dbReference type="InterPro" id="IPR020557">
    <property type="entry name" value="Fumarate_lyase_CS"/>
</dbReference>
<dbReference type="InterPro" id="IPR000362">
    <property type="entry name" value="Fumarate_lyase_fam"/>
</dbReference>
<dbReference type="InterPro" id="IPR022761">
    <property type="entry name" value="Fumarate_lyase_N"/>
</dbReference>
<dbReference type="InterPro" id="IPR008948">
    <property type="entry name" value="L-Aspartase-like"/>
</dbReference>
<dbReference type="NCBIfam" id="TIGR00838">
    <property type="entry name" value="argH"/>
    <property type="match status" value="1"/>
</dbReference>
<dbReference type="NCBIfam" id="NF008964">
    <property type="entry name" value="PRK12308.1"/>
    <property type="match status" value="1"/>
</dbReference>
<dbReference type="PANTHER" id="PTHR43814">
    <property type="entry name" value="ARGININOSUCCINATE LYASE"/>
    <property type="match status" value="1"/>
</dbReference>
<dbReference type="PANTHER" id="PTHR43814:SF1">
    <property type="entry name" value="ARGININOSUCCINATE LYASE"/>
    <property type="match status" value="1"/>
</dbReference>
<dbReference type="Pfam" id="PF14698">
    <property type="entry name" value="ASL_C2"/>
    <property type="match status" value="1"/>
</dbReference>
<dbReference type="Pfam" id="PF00206">
    <property type="entry name" value="Lyase_1"/>
    <property type="match status" value="1"/>
</dbReference>
<dbReference type="PRINTS" id="PR00145">
    <property type="entry name" value="ARGSUCLYASE"/>
</dbReference>
<dbReference type="PRINTS" id="PR00149">
    <property type="entry name" value="FUMRATELYASE"/>
</dbReference>
<dbReference type="SUPFAM" id="SSF48557">
    <property type="entry name" value="L-aspartase-like"/>
    <property type="match status" value="1"/>
</dbReference>
<dbReference type="PROSITE" id="PS00163">
    <property type="entry name" value="FUMARATE_LYASES"/>
    <property type="match status" value="1"/>
</dbReference>